<reference key="1">
    <citation type="journal article" date="2005" name="PLoS Biol.">
        <title>The genome sequence of Rickettsia felis identifies the first putative conjugative plasmid in an obligate intracellular parasite.</title>
        <authorList>
            <person name="Ogata H."/>
            <person name="Renesto P."/>
            <person name="Audic S."/>
            <person name="Robert C."/>
            <person name="Blanc G."/>
            <person name="Fournier P.-E."/>
            <person name="Parinello H."/>
            <person name="Claverie J.-M."/>
            <person name="Raoult D."/>
        </authorList>
    </citation>
    <scope>NUCLEOTIDE SEQUENCE [LARGE SCALE GENOMIC DNA]</scope>
    <source>
        <strain>ATCC VR-1525 / URRWXCal2</strain>
    </source>
</reference>
<feature type="chain" id="PRO_0000287847" description="NADH-quinone oxidoreductase subunit K">
    <location>
        <begin position="1"/>
        <end position="110"/>
    </location>
</feature>
<feature type="transmembrane region" description="Helical" evidence="1">
    <location>
        <begin position="13"/>
        <end position="33"/>
    </location>
</feature>
<feature type="transmembrane region" description="Helical" evidence="1">
    <location>
        <begin position="41"/>
        <end position="61"/>
    </location>
</feature>
<feature type="transmembrane region" description="Helical" evidence="1">
    <location>
        <begin position="73"/>
        <end position="93"/>
    </location>
</feature>
<name>NUOK_RICFE</name>
<accession>Q4UK28</accession>
<dbReference type="EC" id="7.1.1.-" evidence="1"/>
<dbReference type="EMBL" id="CP000053">
    <property type="protein sequence ID" value="AAY62107.1"/>
    <property type="molecule type" value="Genomic_DNA"/>
</dbReference>
<dbReference type="SMR" id="Q4UK28"/>
<dbReference type="STRING" id="315456.RF_1256"/>
<dbReference type="KEGG" id="rfe:RF_1256"/>
<dbReference type="eggNOG" id="COG0713">
    <property type="taxonomic scope" value="Bacteria"/>
</dbReference>
<dbReference type="HOGENOM" id="CLU_144724_2_0_5"/>
<dbReference type="Proteomes" id="UP000008548">
    <property type="component" value="Chromosome"/>
</dbReference>
<dbReference type="GO" id="GO:0030964">
    <property type="term" value="C:NADH dehydrogenase complex"/>
    <property type="evidence" value="ECO:0007669"/>
    <property type="project" value="TreeGrafter"/>
</dbReference>
<dbReference type="GO" id="GO:0005886">
    <property type="term" value="C:plasma membrane"/>
    <property type="evidence" value="ECO:0007669"/>
    <property type="project" value="UniProtKB-SubCell"/>
</dbReference>
<dbReference type="GO" id="GO:0050136">
    <property type="term" value="F:NADH:ubiquinone reductase (non-electrogenic) activity"/>
    <property type="evidence" value="ECO:0007669"/>
    <property type="project" value="UniProtKB-UniRule"/>
</dbReference>
<dbReference type="GO" id="GO:0048038">
    <property type="term" value="F:quinone binding"/>
    <property type="evidence" value="ECO:0007669"/>
    <property type="project" value="UniProtKB-KW"/>
</dbReference>
<dbReference type="GO" id="GO:0042773">
    <property type="term" value="P:ATP synthesis coupled electron transport"/>
    <property type="evidence" value="ECO:0007669"/>
    <property type="project" value="InterPro"/>
</dbReference>
<dbReference type="FunFam" id="1.10.287.3510:FF:000001">
    <property type="entry name" value="NADH-quinone oxidoreductase subunit K"/>
    <property type="match status" value="1"/>
</dbReference>
<dbReference type="Gene3D" id="1.10.287.3510">
    <property type="match status" value="1"/>
</dbReference>
<dbReference type="HAMAP" id="MF_01456">
    <property type="entry name" value="NDH1_NuoK"/>
    <property type="match status" value="1"/>
</dbReference>
<dbReference type="InterPro" id="IPR001133">
    <property type="entry name" value="NADH_UbQ_OxRdtase_chain4L/K"/>
</dbReference>
<dbReference type="InterPro" id="IPR039428">
    <property type="entry name" value="NUOK/Mnh_C1-like"/>
</dbReference>
<dbReference type="NCBIfam" id="NF004320">
    <property type="entry name" value="PRK05715.1-2"/>
    <property type="match status" value="1"/>
</dbReference>
<dbReference type="NCBIfam" id="NF004321">
    <property type="entry name" value="PRK05715.1-3"/>
    <property type="match status" value="1"/>
</dbReference>
<dbReference type="NCBIfam" id="NF004323">
    <property type="entry name" value="PRK05715.1-5"/>
    <property type="match status" value="1"/>
</dbReference>
<dbReference type="PANTHER" id="PTHR11434:SF21">
    <property type="entry name" value="NADH DEHYDROGENASE SUBUNIT 4L-RELATED"/>
    <property type="match status" value="1"/>
</dbReference>
<dbReference type="PANTHER" id="PTHR11434">
    <property type="entry name" value="NADH-UBIQUINONE OXIDOREDUCTASE SUBUNIT ND4L"/>
    <property type="match status" value="1"/>
</dbReference>
<dbReference type="Pfam" id="PF00420">
    <property type="entry name" value="Oxidored_q2"/>
    <property type="match status" value="1"/>
</dbReference>
<keyword id="KW-0997">Cell inner membrane</keyword>
<keyword id="KW-1003">Cell membrane</keyword>
<keyword id="KW-0472">Membrane</keyword>
<keyword id="KW-0520">NAD</keyword>
<keyword id="KW-0874">Quinone</keyword>
<keyword id="KW-1278">Translocase</keyword>
<keyword id="KW-0812">Transmembrane</keyword>
<keyword id="KW-1133">Transmembrane helix</keyword>
<keyword id="KW-0813">Transport</keyword>
<comment type="function">
    <text evidence="1">NDH-1 shuttles electrons from NADH, via FMN and iron-sulfur (Fe-S) centers, to quinones in the respiratory chain. The immediate electron acceptor for the enzyme in this species is believed to be ubiquinone. Couples the redox reaction to proton translocation (for every two electrons transferred, four hydrogen ions are translocated across the cytoplasmic membrane), and thus conserves the redox energy in a proton gradient.</text>
</comment>
<comment type="catalytic activity">
    <reaction evidence="1">
        <text>a quinone + NADH + 5 H(+)(in) = a quinol + NAD(+) + 4 H(+)(out)</text>
        <dbReference type="Rhea" id="RHEA:57888"/>
        <dbReference type="ChEBI" id="CHEBI:15378"/>
        <dbReference type="ChEBI" id="CHEBI:24646"/>
        <dbReference type="ChEBI" id="CHEBI:57540"/>
        <dbReference type="ChEBI" id="CHEBI:57945"/>
        <dbReference type="ChEBI" id="CHEBI:132124"/>
    </reaction>
</comment>
<comment type="subunit">
    <text evidence="1">NDH-1 is composed of 14 different subunits. Subunits NuoA, H, J, K, L, M, N constitute the membrane sector of the complex.</text>
</comment>
<comment type="subcellular location">
    <subcellularLocation>
        <location evidence="1">Cell inner membrane</location>
        <topology evidence="1">Multi-pass membrane protein</topology>
    </subcellularLocation>
</comment>
<comment type="similarity">
    <text evidence="1">Belongs to the complex I subunit 4L family.</text>
</comment>
<gene>
    <name evidence="1" type="primary">nuoK</name>
    <name type="ordered locus">RF_1256</name>
</gene>
<proteinExistence type="inferred from homology"/>
<protein>
    <recommendedName>
        <fullName evidence="1">NADH-quinone oxidoreductase subunit K</fullName>
        <ecNumber evidence="1">7.1.1.-</ecNumber>
    </recommendedName>
    <alternativeName>
        <fullName evidence="1">NADH dehydrogenase I subunit K</fullName>
    </alternativeName>
    <alternativeName>
        <fullName evidence="1">NDH-1 subunit K</fullName>
    </alternativeName>
</protein>
<organism>
    <name type="scientific">Rickettsia felis (strain ATCC VR-1525 / URRWXCal2)</name>
    <name type="common">Rickettsia azadi</name>
    <dbReference type="NCBI Taxonomy" id="315456"/>
    <lineage>
        <taxon>Bacteria</taxon>
        <taxon>Pseudomonadati</taxon>
        <taxon>Pseudomonadota</taxon>
        <taxon>Alphaproteobacteria</taxon>
        <taxon>Rickettsiales</taxon>
        <taxon>Rickettsiaceae</taxon>
        <taxon>Rickettsieae</taxon>
        <taxon>Rickettsia</taxon>
        <taxon>spotted fever group</taxon>
    </lineage>
</organism>
<sequence>MSRILNMNEYISLNHYLILSSLVFTIGMFGLFMHRKNIINILMSIELMLLAVNINFVAFSIYMQELSGQIFSIIILTVAAAETSIGLAILLIYFRNKGSIEITDINQMRG</sequence>
<evidence type="ECO:0000255" key="1">
    <source>
        <dbReference type="HAMAP-Rule" id="MF_01456"/>
    </source>
</evidence>